<reference key="1">
    <citation type="journal article" date="1995" name="Plant Mol. Biol. Rep.">
        <title>Nucleotide sequence of the cyanelle DNA from Cyanophora paradoxa.</title>
        <authorList>
            <person name="Stirewalt V.L."/>
            <person name="Michalowski C.B."/>
            <person name="Loeffelhardt W."/>
            <person name="Bohnert H.J."/>
            <person name="Bryant D.A."/>
        </authorList>
    </citation>
    <scope>NUCLEOTIDE SEQUENCE [LARGE SCALE GENOMIC DNA]</scope>
    <source>
        <strain>UTEX LB 555 / Pringsheim</strain>
    </source>
</reference>
<reference key="2">
    <citation type="book" date="1997" name="Eukaryotism and symbiosis">
        <title>The complete sequence of the cyanelle genome of Cyanophora paradoxa: the genetic complexity of a primitive plastid.</title>
        <editorList>
            <person name="Schenk H.E.A."/>
            <person name="Herrmann R."/>
            <person name="Jeon K.W."/>
            <person name="Mueller N.E."/>
            <person name="Schwemmler W."/>
        </editorList>
        <authorList>
            <person name="Loeffelhardt W."/>
            <person name="Stirewalt V.L."/>
            <person name="Michalowski C.B."/>
            <person name="Annarella M."/>
            <person name="Farley J.Y."/>
            <person name="Schluchter W.M."/>
            <person name="Chung S."/>
            <person name="Newmann-Spallart C."/>
            <person name="Steiner J.M."/>
            <person name="Jakowitsch J."/>
            <person name="Bohnert H.J."/>
            <person name="Bryant D.A."/>
        </authorList>
    </citation>
    <scope>NUCLEOTIDE SEQUENCE [LARGE SCALE GENOMIC DNA]</scope>
    <source>
        <strain>UTEX LB 555 / Pringsheim</strain>
    </source>
</reference>
<comment type="subcellular location">
    <subcellularLocation>
        <location>Plastid</location>
        <location>Cyanelle</location>
    </subcellularLocation>
</comment>
<keyword id="KW-0194">Cyanelle</keyword>
<keyword id="KW-0934">Plastid</keyword>
<sequence length="182" mass="21945">MGKPNLKDQIKQLYLVLLEEIKIFILTIKLVISKKNVWIISYYHFLKKVVVSKKQILNLSRLLLRFTLLSIFILFVLDLISKYITAPILTGIFNFIFKILISLVNLLYKAIYWIYIIFAIFLHFMNYLLVLLELTLQPIFEWIEIFFFNSLIYFLKLIFLLYSNFEKGILIFLMWLKSRIKK</sequence>
<name>YCX2_CYAPA</name>
<proteinExistence type="predicted"/>
<feature type="chain" id="PRO_0000217428" description="Uncharacterized 24.3 kDa protein in psbH-rpl11 intergenic region">
    <location>
        <begin position="1"/>
        <end position="182"/>
    </location>
</feature>
<accession>P48324</accession>
<geneLocation type="cyanelle"/>
<organism>
    <name type="scientific">Cyanophora paradoxa</name>
    <dbReference type="NCBI Taxonomy" id="2762"/>
    <lineage>
        <taxon>Eukaryota</taxon>
        <taxon>Glaucocystophyceae</taxon>
        <taxon>Cyanophoraceae</taxon>
        <taxon>Cyanophora</taxon>
    </lineage>
</organism>
<dbReference type="EMBL" id="U30821">
    <property type="protein sequence ID" value="AAA81201.1"/>
    <property type="molecule type" value="Genomic_DNA"/>
</dbReference>
<dbReference type="PIR" id="T06858">
    <property type="entry name" value="T06858"/>
</dbReference>
<dbReference type="RefSeq" id="NP_043170.1">
    <property type="nucleotide sequence ID" value="NC_001675.1"/>
</dbReference>
<dbReference type="SMR" id="P48324"/>
<dbReference type="GeneID" id="801576"/>
<dbReference type="GO" id="GO:0009842">
    <property type="term" value="C:cyanelle"/>
    <property type="evidence" value="ECO:0007669"/>
    <property type="project" value="UniProtKB-SubCell"/>
</dbReference>
<protein>
    <recommendedName>
        <fullName>Uncharacterized 24.3 kDa protein in psbH-rpl11 intergenic region</fullName>
    </recommendedName>
    <alternativeName>
        <fullName>ORF182</fullName>
    </alternativeName>
</protein>